<proteinExistence type="inferred from homology"/>
<sequence>MAEKNMETIVNLAKHRGFVFPGSEIYGGLANTWDYGPLGVELKNNVKRAWWQKFVQQSPYNVGLDAAILMNPKTWEASGHLSNFNDPMIDNKDSKIRYRADKLIEDYMHAQGDEHFIADGMSFDEMKQFIDEKGIVCPVSGTANWTEIRQFNLMFKTFQGVTESSTNEIFLRPETAQGIFVNYKNVQRSMRKKLPFGIAQVGKSFRNEITPGNFIFRTREFEQMELEFFCKPGTEIEWQEYWKNFAAKWLKDLGIKEENTKLRDHDEDELSHYSNATTDIEYKFPFGWGELWGIASRTDFDLKAHMAASGDDFSYHDQETNEKYVPYCIEPSLGADRVTLAFLCDAYEEETLEGGDSRTVMRFHPALAPYKAAILPLSKKLSPDAMKVYEALSADFAIDFDESQSIGKRYRRQDEIGTPFCITFDFDSLEDNQVTVRDRDTMEQVRMPISEVKAFLDEKIKF</sequence>
<comment type="function">
    <text evidence="1">Catalyzes the attachment of glycine to tRNA(Gly).</text>
</comment>
<comment type="catalytic activity">
    <reaction evidence="1">
        <text>tRNA(Gly) + glycine + ATP = glycyl-tRNA(Gly) + AMP + diphosphate</text>
        <dbReference type="Rhea" id="RHEA:16013"/>
        <dbReference type="Rhea" id="RHEA-COMP:9664"/>
        <dbReference type="Rhea" id="RHEA-COMP:9683"/>
        <dbReference type="ChEBI" id="CHEBI:30616"/>
        <dbReference type="ChEBI" id="CHEBI:33019"/>
        <dbReference type="ChEBI" id="CHEBI:57305"/>
        <dbReference type="ChEBI" id="CHEBI:78442"/>
        <dbReference type="ChEBI" id="CHEBI:78522"/>
        <dbReference type="ChEBI" id="CHEBI:456215"/>
        <dbReference type="EC" id="6.1.1.14"/>
    </reaction>
</comment>
<comment type="subunit">
    <text evidence="1">Homodimer.</text>
</comment>
<comment type="subcellular location">
    <subcellularLocation>
        <location evidence="1">Cytoplasm</location>
    </subcellularLocation>
</comment>
<comment type="similarity">
    <text evidence="1">Belongs to the class-II aminoacyl-tRNA synthetase family.</text>
</comment>
<accession>B9E6V6</accession>
<name>SYG_MACCJ</name>
<protein>
    <recommendedName>
        <fullName evidence="1">Glycine--tRNA ligase</fullName>
        <ecNumber evidence="1">6.1.1.14</ecNumber>
    </recommendedName>
    <alternativeName>
        <fullName evidence="1">Glycyl-tRNA synthetase</fullName>
        <shortName evidence="1">GlyRS</shortName>
    </alternativeName>
</protein>
<organism>
    <name type="scientific">Macrococcus caseolyticus (strain JCSC5402)</name>
    <name type="common">Macrococcoides caseolyticum</name>
    <dbReference type="NCBI Taxonomy" id="458233"/>
    <lineage>
        <taxon>Bacteria</taxon>
        <taxon>Bacillati</taxon>
        <taxon>Bacillota</taxon>
        <taxon>Bacilli</taxon>
        <taxon>Bacillales</taxon>
        <taxon>Staphylococcaceae</taxon>
        <taxon>Macrococcoides</taxon>
    </lineage>
</organism>
<gene>
    <name evidence="1" type="primary">glyQS</name>
    <name type="ordered locus">MCCL_1217</name>
</gene>
<evidence type="ECO:0000255" key="1">
    <source>
        <dbReference type="HAMAP-Rule" id="MF_00253"/>
    </source>
</evidence>
<reference key="1">
    <citation type="journal article" date="2009" name="J. Bacteriol.">
        <title>Complete genome sequence of Macrococcus caseolyticus strain JCSCS5402, reflecting the ancestral genome of the human-pathogenic staphylococci.</title>
        <authorList>
            <person name="Baba T."/>
            <person name="Kuwahara-Arai K."/>
            <person name="Uchiyama I."/>
            <person name="Takeuchi F."/>
            <person name="Ito T."/>
            <person name="Hiramatsu K."/>
        </authorList>
    </citation>
    <scope>NUCLEOTIDE SEQUENCE [LARGE SCALE GENOMIC DNA]</scope>
    <source>
        <strain>JCSC5402</strain>
    </source>
</reference>
<keyword id="KW-0030">Aminoacyl-tRNA synthetase</keyword>
<keyword id="KW-0067">ATP-binding</keyword>
<keyword id="KW-0963">Cytoplasm</keyword>
<keyword id="KW-0436">Ligase</keyword>
<keyword id="KW-0547">Nucleotide-binding</keyword>
<keyword id="KW-0648">Protein biosynthesis</keyword>
<keyword id="KW-1185">Reference proteome</keyword>
<feature type="chain" id="PRO_1000125532" description="Glycine--tRNA ligase">
    <location>
        <begin position="1"/>
        <end position="462"/>
    </location>
</feature>
<feature type="binding site" evidence="1">
    <location>
        <position position="99"/>
    </location>
    <ligand>
        <name>substrate</name>
    </ligand>
</feature>
<feature type="binding site" evidence="1">
    <location>
        <position position="174"/>
    </location>
    <ligand>
        <name>substrate</name>
    </ligand>
</feature>
<feature type="binding site" evidence="1">
    <location>
        <begin position="206"/>
        <end position="208"/>
    </location>
    <ligand>
        <name>ATP</name>
        <dbReference type="ChEBI" id="CHEBI:30616"/>
    </ligand>
</feature>
<feature type="binding site" evidence="1">
    <location>
        <begin position="216"/>
        <end position="221"/>
    </location>
    <ligand>
        <name>ATP</name>
        <dbReference type="ChEBI" id="CHEBI:30616"/>
    </ligand>
</feature>
<feature type="binding site" evidence="1">
    <location>
        <begin position="221"/>
        <end position="225"/>
    </location>
    <ligand>
        <name>substrate</name>
    </ligand>
</feature>
<feature type="binding site" evidence="1">
    <location>
        <begin position="290"/>
        <end position="291"/>
    </location>
    <ligand>
        <name>ATP</name>
        <dbReference type="ChEBI" id="CHEBI:30616"/>
    </ligand>
</feature>
<feature type="binding site" evidence="1">
    <location>
        <begin position="330"/>
        <end position="334"/>
    </location>
    <ligand>
        <name>substrate</name>
    </ligand>
</feature>
<feature type="binding site" evidence="1">
    <location>
        <begin position="334"/>
        <end position="337"/>
    </location>
    <ligand>
        <name>ATP</name>
        <dbReference type="ChEBI" id="CHEBI:30616"/>
    </ligand>
</feature>
<dbReference type="EC" id="6.1.1.14" evidence="1"/>
<dbReference type="EMBL" id="AP009484">
    <property type="protein sequence ID" value="BAH17924.1"/>
    <property type="molecule type" value="Genomic_DNA"/>
</dbReference>
<dbReference type="RefSeq" id="WP_012657122.1">
    <property type="nucleotide sequence ID" value="NC_011999.1"/>
</dbReference>
<dbReference type="SMR" id="B9E6V6"/>
<dbReference type="STRING" id="458233.MCCL_1217"/>
<dbReference type="GeneID" id="61128893"/>
<dbReference type="KEGG" id="mcl:MCCL_1217"/>
<dbReference type="eggNOG" id="COG0423">
    <property type="taxonomic scope" value="Bacteria"/>
</dbReference>
<dbReference type="HOGENOM" id="CLU_015515_2_1_9"/>
<dbReference type="OrthoDB" id="9760853at2"/>
<dbReference type="Proteomes" id="UP000001383">
    <property type="component" value="Chromosome"/>
</dbReference>
<dbReference type="GO" id="GO:0005737">
    <property type="term" value="C:cytoplasm"/>
    <property type="evidence" value="ECO:0007669"/>
    <property type="project" value="UniProtKB-SubCell"/>
</dbReference>
<dbReference type="GO" id="GO:0005524">
    <property type="term" value="F:ATP binding"/>
    <property type="evidence" value="ECO:0007669"/>
    <property type="project" value="UniProtKB-UniRule"/>
</dbReference>
<dbReference type="GO" id="GO:0140096">
    <property type="term" value="F:catalytic activity, acting on a protein"/>
    <property type="evidence" value="ECO:0007669"/>
    <property type="project" value="UniProtKB-ARBA"/>
</dbReference>
<dbReference type="GO" id="GO:0004820">
    <property type="term" value="F:glycine-tRNA ligase activity"/>
    <property type="evidence" value="ECO:0000250"/>
    <property type="project" value="UniProtKB"/>
</dbReference>
<dbReference type="GO" id="GO:0046983">
    <property type="term" value="F:protein dimerization activity"/>
    <property type="evidence" value="ECO:0000250"/>
    <property type="project" value="UniProtKB"/>
</dbReference>
<dbReference type="GO" id="GO:0016740">
    <property type="term" value="F:transferase activity"/>
    <property type="evidence" value="ECO:0007669"/>
    <property type="project" value="UniProtKB-ARBA"/>
</dbReference>
<dbReference type="GO" id="GO:0006426">
    <property type="term" value="P:glycyl-tRNA aminoacylation"/>
    <property type="evidence" value="ECO:0007669"/>
    <property type="project" value="UniProtKB-UniRule"/>
</dbReference>
<dbReference type="CDD" id="cd00774">
    <property type="entry name" value="GlyRS-like_core"/>
    <property type="match status" value="1"/>
</dbReference>
<dbReference type="CDD" id="cd00858">
    <property type="entry name" value="GlyRS_anticodon"/>
    <property type="match status" value="1"/>
</dbReference>
<dbReference type="FunFam" id="3.40.50.800:FF:000002">
    <property type="entry name" value="Glycine--tRNA ligase"/>
    <property type="match status" value="1"/>
</dbReference>
<dbReference type="Gene3D" id="3.30.40.230">
    <property type="match status" value="1"/>
</dbReference>
<dbReference type="Gene3D" id="3.40.50.800">
    <property type="entry name" value="Anticodon-binding domain"/>
    <property type="match status" value="1"/>
</dbReference>
<dbReference type="Gene3D" id="3.30.930.10">
    <property type="entry name" value="Bira Bifunctional Protein, Domain 2"/>
    <property type="match status" value="1"/>
</dbReference>
<dbReference type="HAMAP" id="MF_00253_B">
    <property type="entry name" value="Gly_tRNA_synth_B"/>
    <property type="match status" value="1"/>
</dbReference>
<dbReference type="InterPro" id="IPR002314">
    <property type="entry name" value="aa-tRNA-synt_IIb"/>
</dbReference>
<dbReference type="InterPro" id="IPR006195">
    <property type="entry name" value="aa-tRNA-synth_II"/>
</dbReference>
<dbReference type="InterPro" id="IPR045864">
    <property type="entry name" value="aa-tRNA-synth_II/BPL/LPL"/>
</dbReference>
<dbReference type="InterPro" id="IPR004154">
    <property type="entry name" value="Anticodon-bd"/>
</dbReference>
<dbReference type="InterPro" id="IPR036621">
    <property type="entry name" value="Anticodon-bd_dom_sf"/>
</dbReference>
<dbReference type="InterPro" id="IPR027031">
    <property type="entry name" value="Gly-tRNA_synthase/POLG2"/>
</dbReference>
<dbReference type="InterPro" id="IPR022961">
    <property type="entry name" value="Gly_tRNA_ligase_bac"/>
</dbReference>
<dbReference type="InterPro" id="IPR033731">
    <property type="entry name" value="GlyRS-like_core"/>
</dbReference>
<dbReference type="InterPro" id="IPR002315">
    <property type="entry name" value="tRNA-synt_gly"/>
</dbReference>
<dbReference type="NCBIfam" id="TIGR00389">
    <property type="entry name" value="glyS_dimeric"/>
    <property type="match status" value="1"/>
</dbReference>
<dbReference type="NCBIfam" id="NF003211">
    <property type="entry name" value="PRK04173.1"/>
    <property type="match status" value="1"/>
</dbReference>
<dbReference type="PANTHER" id="PTHR10745:SF8">
    <property type="entry name" value="DNA POLYMERASE SUBUNIT GAMMA-2, MITOCHONDRIAL"/>
    <property type="match status" value="1"/>
</dbReference>
<dbReference type="PANTHER" id="PTHR10745">
    <property type="entry name" value="GLYCYL-TRNA SYNTHETASE/DNA POLYMERASE SUBUNIT GAMMA-2"/>
    <property type="match status" value="1"/>
</dbReference>
<dbReference type="Pfam" id="PF03129">
    <property type="entry name" value="HGTP_anticodon"/>
    <property type="match status" value="1"/>
</dbReference>
<dbReference type="Pfam" id="PF00587">
    <property type="entry name" value="tRNA-synt_2b"/>
    <property type="match status" value="1"/>
</dbReference>
<dbReference type="PRINTS" id="PR01043">
    <property type="entry name" value="TRNASYNTHGLY"/>
</dbReference>
<dbReference type="SUPFAM" id="SSF52954">
    <property type="entry name" value="Class II aaRS ABD-related"/>
    <property type="match status" value="1"/>
</dbReference>
<dbReference type="SUPFAM" id="SSF55681">
    <property type="entry name" value="Class II aaRS and biotin synthetases"/>
    <property type="match status" value="1"/>
</dbReference>
<dbReference type="PROSITE" id="PS50862">
    <property type="entry name" value="AA_TRNA_LIGASE_II"/>
    <property type="match status" value="1"/>
</dbReference>